<proteinExistence type="inferred from homology"/>
<reference key="1">
    <citation type="journal article" date="1994" name="EMBO J.">
        <title>Eight genes and alternative RNA processing pathways generate an unexpectedly large diversity of cytoplasmic intermediate filament proteins in the nematode Caenorhabditis elegans.</title>
        <authorList>
            <person name="Dodemont H."/>
            <person name="Riemer D."/>
            <person name="Ledger T.N."/>
            <person name="Weber K."/>
        </authorList>
    </citation>
    <scope>NUCLEOTIDE SEQUENCE [GENOMIC DNA]</scope>
    <source>
        <strain>Bristol N2</strain>
    </source>
</reference>
<reference key="2">
    <citation type="journal article" date="1998" name="Science">
        <title>Genome sequence of the nematode C. elegans: a platform for investigating biology.</title>
        <authorList>
            <consortium name="The C. elegans sequencing consortium"/>
        </authorList>
    </citation>
    <scope>NUCLEOTIDE SEQUENCE [LARGE SCALE GENOMIC DNA]</scope>
    <source>
        <strain>Bristol N2</strain>
    </source>
</reference>
<reference key="3">
    <citation type="journal article" date="2001" name="Proc. Natl. Acad. Sci. U.S.A.">
        <title>Essential roles for four cytoplasmic intermediate filament proteins in Caenorhabditis elegans development.</title>
        <authorList>
            <person name="Karabinos A."/>
            <person name="Schmidt H."/>
            <person name="Harborth J."/>
            <person name="Schnabel R."/>
            <person name="Weber K."/>
        </authorList>
    </citation>
    <scope>FUNCTION</scope>
</reference>
<sequence>MSLYGGIPTNLVSGMSSAGAICTTQIRDAREREKREIGLLNDRLADYIEKVRFLKAQNHVLSHDIEILRRGFSGGGHISSFFESEISNCTVISERILSSRTKFQADITGLEGEIEIYRKKWLEALKVVRSHREDHHVNLDKLAEVEAQIALFNRKIRIVEEDVLRIRRETGGIQNDIGRIHSQIHAEIALKNERHHSVQMLLQRVQVIQTENSSRIEQELIYIHRDTTLENRDYFRQELQAAMRDIRANYEAMSIRSREDIEIAYRKRIDEIRVIPAHVHIEDYREELLSIRTTLSTTHSRLAEIESRNAWLLTTITDLKHQQAEEARIFEATLDAKQATYEQFKERCTELSIQMEKLCDHETSLQAELERYRVLLNGANVTTYVSNSTGAAGYRSSTHVATTTTTTTNGYSSGYTAGGYTSGGYTTGGYTRGITAGGAVGGISTGGYIGRSSSSHGISVGGNIGGVSVGGHINGYHASGDISAAGRHHESSYSYSSSNN</sequence>
<accession>O45168</accession>
<accession>Q21066</accession>
<keyword id="KW-0175">Coiled coil</keyword>
<keyword id="KW-0963">Cytoplasm</keyword>
<keyword id="KW-0403">Intermediate filament</keyword>
<keyword id="KW-1185">Reference proteome</keyword>
<dbReference type="EMBL" id="X70832">
    <property type="protein sequence ID" value="CAA50180.1"/>
    <property type="molecule type" value="Genomic_DNA"/>
</dbReference>
<dbReference type="EMBL" id="FO080739">
    <property type="protein sequence ID" value="CCD66314.1"/>
    <property type="molecule type" value="Genomic_DNA"/>
</dbReference>
<dbReference type="PIR" id="S46328">
    <property type="entry name" value="S46328"/>
</dbReference>
<dbReference type="RefSeq" id="NP_503783.1">
    <property type="nucleotide sequence ID" value="NM_071382.7"/>
</dbReference>
<dbReference type="SMR" id="O45168"/>
<dbReference type="BioGRID" id="43804">
    <property type="interactions" value="4"/>
</dbReference>
<dbReference type="FunCoup" id="O45168">
    <property type="interactions" value="10"/>
</dbReference>
<dbReference type="STRING" id="6239.F37B4.2.1"/>
<dbReference type="iPTMnet" id="O45168"/>
<dbReference type="PaxDb" id="6239-F37B4.2"/>
<dbReference type="PeptideAtlas" id="O45168"/>
<dbReference type="EnsemblMetazoa" id="F37B4.2.1">
    <property type="protein sequence ID" value="F37B4.2.1"/>
    <property type="gene ID" value="WBGene00002055"/>
</dbReference>
<dbReference type="GeneID" id="178747"/>
<dbReference type="KEGG" id="cel:CELE_F37B4.2"/>
<dbReference type="UCSC" id="F37B4.2.1">
    <property type="organism name" value="c. elegans"/>
</dbReference>
<dbReference type="AGR" id="WB:WBGene00002055"/>
<dbReference type="CTD" id="178747"/>
<dbReference type="WormBase" id="F37B4.2">
    <property type="protein sequence ID" value="CE27378"/>
    <property type="gene ID" value="WBGene00002055"/>
    <property type="gene designation" value="ifc-1"/>
</dbReference>
<dbReference type="eggNOG" id="KOG0977">
    <property type="taxonomic scope" value="Eukaryota"/>
</dbReference>
<dbReference type="GeneTree" id="ENSGT00970000196495"/>
<dbReference type="HOGENOM" id="CLU_030212_0_0_1"/>
<dbReference type="InParanoid" id="O45168"/>
<dbReference type="OMA" id="DHETSLQ"/>
<dbReference type="OrthoDB" id="2441647at2759"/>
<dbReference type="PhylomeDB" id="O45168"/>
<dbReference type="Reactome" id="R-CEL-2559584">
    <property type="pathway name" value="Formation of Senescence-Associated Heterochromatin Foci (SAHF)"/>
</dbReference>
<dbReference type="Reactome" id="R-CEL-4419969">
    <property type="pathway name" value="Depolymerization of the Nuclear Lamina"/>
</dbReference>
<dbReference type="Reactome" id="R-CEL-9013405">
    <property type="pathway name" value="RHOD GTPase cycle"/>
</dbReference>
<dbReference type="Reactome" id="R-CEL-9035034">
    <property type="pathway name" value="RHOF GTPase cycle"/>
</dbReference>
<dbReference type="PRO" id="PR:O45168"/>
<dbReference type="Proteomes" id="UP000001940">
    <property type="component" value="Chromosome V"/>
</dbReference>
<dbReference type="Bgee" id="WBGene00002055">
    <property type="expression patterns" value="Expressed in larva and 2 other cell types or tissues"/>
</dbReference>
<dbReference type="GO" id="GO:0005737">
    <property type="term" value="C:cytoplasm"/>
    <property type="evidence" value="ECO:0007669"/>
    <property type="project" value="UniProtKB-SubCell"/>
</dbReference>
<dbReference type="GO" id="GO:0005882">
    <property type="term" value="C:intermediate filament"/>
    <property type="evidence" value="ECO:0007669"/>
    <property type="project" value="UniProtKB-KW"/>
</dbReference>
<dbReference type="GO" id="GO:0005635">
    <property type="term" value="C:nuclear envelope"/>
    <property type="evidence" value="ECO:0000318"/>
    <property type="project" value="GO_Central"/>
</dbReference>
<dbReference type="GO" id="GO:0005652">
    <property type="term" value="C:nuclear lamina"/>
    <property type="evidence" value="ECO:0000318"/>
    <property type="project" value="GO_Central"/>
</dbReference>
<dbReference type="GO" id="GO:0005200">
    <property type="term" value="F:structural constituent of cytoskeleton"/>
    <property type="evidence" value="ECO:0000318"/>
    <property type="project" value="GO_Central"/>
</dbReference>
<dbReference type="GO" id="GO:0031507">
    <property type="term" value="P:heterochromatin formation"/>
    <property type="evidence" value="ECO:0000318"/>
    <property type="project" value="GO_Central"/>
</dbReference>
<dbReference type="GO" id="GO:0006998">
    <property type="term" value="P:nuclear envelope organization"/>
    <property type="evidence" value="ECO:0000318"/>
    <property type="project" value="GO_Central"/>
</dbReference>
<dbReference type="GO" id="GO:0007097">
    <property type="term" value="P:nuclear migration"/>
    <property type="evidence" value="ECO:0000318"/>
    <property type="project" value="GO_Central"/>
</dbReference>
<dbReference type="GO" id="GO:0051664">
    <property type="term" value="P:nuclear pore localization"/>
    <property type="evidence" value="ECO:0000318"/>
    <property type="project" value="GO_Central"/>
</dbReference>
<dbReference type="GO" id="GO:0090435">
    <property type="term" value="P:protein localization to nuclear envelope"/>
    <property type="evidence" value="ECO:0000318"/>
    <property type="project" value="GO_Central"/>
</dbReference>
<dbReference type="Gene3D" id="1.20.5.500">
    <property type="entry name" value="Single helix bin"/>
    <property type="match status" value="1"/>
</dbReference>
<dbReference type="InterPro" id="IPR039008">
    <property type="entry name" value="IF_rod_dom"/>
</dbReference>
<dbReference type="PANTHER" id="PTHR45721:SF10">
    <property type="entry name" value="INTERMEDIATE FILAMENT PROTEIN IFC-1"/>
    <property type="match status" value="1"/>
</dbReference>
<dbReference type="PANTHER" id="PTHR45721">
    <property type="entry name" value="LAMIN DM0-RELATED"/>
    <property type="match status" value="1"/>
</dbReference>
<dbReference type="Pfam" id="PF00038">
    <property type="entry name" value="Filament"/>
    <property type="match status" value="1"/>
</dbReference>
<dbReference type="SMART" id="SM01391">
    <property type="entry name" value="Filament"/>
    <property type="match status" value="1"/>
</dbReference>
<dbReference type="SUPFAM" id="SSF64593">
    <property type="entry name" value="Intermediate filament protein, coiled coil region"/>
    <property type="match status" value="2"/>
</dbReference>
<dbReference type="PROSITE" id="PS51842">
    <property type="entry name" value="IF_ROD_2"/>
    <property type="match status" value="1"/>
</dbReference>
<name>IFC1_CAEEL</name>
<protein>
    <recommendedName>
        <fullName>Intermediate filament protein ifc-1</fullName>
    </recommendedName>
    <alternativeName>
        <fullName>Cel IF C1</fullName>
    </alternativeName>
    <alternativeName>
        <fullName>Intermediate filament protein C1</fullName>
        <shortName>IF-C1</shortName>
    </alternativeName>
</protein>
<gene>
    <name type="primary">ifc-1</name>
    <name type="ORF">F37B4.2</name>
</gene>
<feature type="chain" id="PRO_0000063840" description="Intermediate filament protein ifc-1">
    <location>
        <begin position="1"/>
        <end position="500"/>
    </location>
</feature>
<feature type="domain" description="IF rod" evidence="1">
    <location>
        <begin position="33"/>
        <end position="383"/>
    </location>
</feature>
<feature type="region of interest" description="Head">
    <location>
        <begin position="1"/>
        <end position="36"/>
    </location>
</feature>
<feature type="region of interest" description="Coil 1A">
    <location>
        <begin position="37"/>
        <end position="68"/>
    </location>
</feature>
<feature type="region of interest" description="Linker 1">
    <location>
        <begin position="69"/>
        <end position="81"/>
    </location>
</feature>
<feature type="region of interest" description="Coil 1B">
    <location>
        <begin position="82"/>
        <end position="219"/>
    </location>
</feature>
<feature type="region of interest" description="Linker 12">
    <location>
        <begin position="220"/>
        <end position="237"/>
    </location>
</feature>
<feature type="region of interest" description="Coil 2">
    <location>
        <begin position="238"/>
        <end position="383"/>
    </location>
</feature>
<feature type="region of interest" description="Tail">
    <location>
        <begin position="384"/>
        <end position="496"/>
    </location>
</feature>
<comment type="function">
    <text evidence="2">Cytoplasmic intermediate filaments provide mechanical strength to cells. Not essential protein.</text>
</comment>
<comment type="subcellular location">
    <subcellularLocation>
        <location evidence="3">Cytoplasm</location>
    </subcellularLocation>
</comment>
<comment type="similarity">
    <text evidence="1">Belongs to the intermediate filament family.</text>
</comment>
<organism>
    <name type="scientific">Caenorhabditis elegans</name>
    <dbReference type="NCBI Taxonomy" id="6239"/>
    <lineage>
        <taxon>Eukaryota</taxon>
        <taxon>Metazoa</taxon>
        <taxon>Ecdysozoa</taxon>
        <taxon>Nematoda</taxon>
        <taxon>Chromadorea</taxon>
        <taxon>Rhabditida</taxon>
        <taxon>Rhabditina</taxon>
        <taxon>Rhabditomorpha</taxon>
        <taxon>Rhabditoidea</taxon>
        <taxon>Rhabditidae</taxon>
        <taxon>Peloderinae</taxon>
        <taxon>Caenorhabditis</taxon>
    </lineage>
</organism>
<evidence type="ECO:0000255" key="1">
    <source>
        <dbReference type="PROSITE-ProRule" id="PRU01188"/>
    </source>
</evidence>
<evidence type="ECO:0000269" key="2">
    <source>
    </source>
</evidence>
<evidence type="ECO:0000305" key="3"/>